<feature type="chain" id="PRO_0000324458" description="Stress response protein NST1">
    <location>
        <begin position="1"/>
        <end position="1234"/>
    </location>
</feature>
<feature type="region of interest" description="Disordered" evidence="3">
    <location>
        <begin position="1"/>
        <end position="70"/>
    </location>
</feature>
<feature type="region of interest" description="Disordered" evidence="3">
    <location>
        <begin position="149"/>
        <end position="175"/>
    </location>
</feature>
<feature type="region of interest" description="Disordered" evidence="3">
    <location>
        <begin position="246"/>
        <end position="283"/>
    </location>
</feature>
<feature type="region of interest" description="Disordered" evidence="3">
    <location>
        <begin position="513"/>
        <end position="608"/>
    </location>
</feature>
<feature type="region of interest" description="Disordered" evidence="3">
    <location>
        <begin position="661"/>
        <end position="816"/>
    </location>
</feature>
<feature type="region of interest" description="Disordered" evidence="3">
    <location>
        <begin position="924"/>
        <end position="945"/>
    </location>
</feature>
<feature type="region of interest" description="Disordered" evidence="3">
    <location>
        <begin position="1214"/>
        <end position="1234"/>
    </location>
</feature>
<feature type="coiled-coil region" evidence="2">
    <location>
        <begin position="633"/>
        <end position="826"/>
    </location>
</feature>
<feature type="compositionally biased region" description="Polar residues" evidence="3">
    <location>
        <begin position="1"/>
        <end position="10"/>
    </location>
</feature>
<feature type="compositionally biased region" description="Polar residues" evidence="3">
    <location>
        <begin position="21"/>
        <end position="31"/>
    </location>
</feature>
<feature type="compositionally biased region" description="Basic residues" evidence="3">
    <location>
        <begin position="39"/>
        <end position="51"/>
    </location>
</feature>
<feature type="compositionally biased region" description="Low complexity" evidence="3">
    <location>
        <begin position="161"/>
        <end position="175"/>
    </location>
</feature>
<feature type="compositionally biased region" description="Basic and acidic residues" evidence="3">
    <location>
        <begin position="263"/>
        <end position="273"/>
    </location>
</feature>
<feature type="compositionally biased region" description="Basic and acidic residues" evidence="3">
    <location>
        <begin position="513"/>
        <end position="527"/>
    </location>
</feature>
<feature type="compositionally biased region" description="Acidic residues" evidence="3">
    <location>
        <begin position="555"/>
        <end position="587"/>
    </location>
</feature>
<feature type="compositionally biased region" description="Acidic residues" evidence="3">
    <location>
        <begin position="596"/>
        <end position="605"/>
    </location>
</feature>
<feature type="compositionally biased region" description="Basic and acidic residues" evidence="3">
    <location>
        <begin position="661"/>
        <end position="670"/>
    </location>
</feature>
<feature type="compositionally biased region" description="Basic and acidic residues" evidence="3">
    <location>
        <begin position="679"/>
        <end position="806"/>
    </location>
</feature>
<feature type="compositionally biased region" description="Low complexity" evidence="3">
    <location>
        <begin position="929"/>
        <end position="941"/>
    </location>
</feature>
<feature type="compositionally biased region" description="Low complexity" evidence="3">
    <location>
        <begin position="1214"/>
        <end position="1227"/>
    </location>
</feature>
<organism>
    <name type="scientific">Scheffersomyces stipitis (strain ATCC 58785 / CBS 6054 / NBRC 10063 / NRRL Y-11545)</name>
    <name type="common">Yeast</name>
    <name type="synonym">Pichia stipitis</name>
    <dbReference type="NCBI Taxonomy" id="322104"/>
    <lineage>
        <taxon>Eukaryota</taxon>
        <taxon>Fungi</taxon>
        <taxon>Dikarya</taxon>
        <taxon>Ascomycota</taxon>
        <taxon>Saccharomycotina</taxon>
        <taxon>Pichiomycetes</taxon>
        <taxon>Debaryomycetaceae</taxon>
        <taxon>Scheffersomyces</taxon>
    </lineage>
</organism>
<comment type="function">
    <text evidence="1">May act as a negative regulator of salt tolerance.</text>
</comment>
<comment type="subcellular location">
    <subcellularLocation>
        <location evidence="1">Cytoplasm</location>
    </subcellularLocation>
</comment>
<comment type="similarity">
    <text evidence="4">Belongs to the NST1 family.</text>
</comment>
<evidence type="ECO:0000250" key="1"/>
<evidence type="ECO:0000255" key="2"/>
<evidence type="ECO:0000256" key="3">
    <source>
        <dbReference type="SAM" id="MobiDB-lite"/>
    </source>
</evidence>
<evidence type="ECO:0000305" key="4"/>
<gene>
    <name type="primary">NST1</name>
    <name type="ORF">PICST_68216</name>
</gene>
<dbReference type="EMBL" id="CP000500">
    <property type="protein sequence ID" value="ABN67640.2"/>
    <property type="molecule type" value="Genomic_DNA"/>
</dbReference>
<dbReference type="RefSeq" id="XP_001385669.2">
    <property type="nucleotide sequence ID" value="XM_001385632.1"/>
</dbReference>
<dbReference type="SMR" id="A3LYI0"/>
<dbReference type="FunCoup" id="A3LYI0">
    <property type="interactions" value="17"/>
</dbReference>
<dbReference type="GeneID" id="4840313"/>
<dbReference type="KEGG" id="pic:PICST_68216"/>
<dbReference type="eggNOG" id="ENOG502QSSK">
    <property type="taxonomic scope" value="Eukaryota"/>
</dbReference>
<dbReference type="HOGENOM" id="CLU_003284_0_0_1"/>
<dbReference type="InParanoid" id="A3LYI0"/>
<dbReference type="OMA" id="SCACKYC"/>
<dbReference type="OrthoDB" id="21629at2759"/>
<dbReference type="Proteomes" id="UP000002258">
    <property type="component" value="Chromosome 6"/>
</dbReference>
<dbReference type="GO" id="GO:0005737">
    <property type="term" value="C:cytoplasm"/>
    <property type="evidence" value="ECO:0007669"/>
    <property type="project" value="UniProtKB-SubCell"/>
</dbReference>
<dbReference type="InterPro" id="IPR025279">
    <property type="entry name" value="NST1"/>
</dbReference>
<dbReference type="Pfam" id="PF13945">
    <property type="entry name" value="NST1"/>
    <property type="match status" value="2"/>
</dbReference>
<sequence length="1234" mass="137852">MSDTTDSTSRFRLGDDIHFSYDNQSQPTTSESPAPSSSNKKKKKKANKKHKQPVEATLNNPEDDYPTSRVIKQAPNGDVIVESLDDEASHQNQENHRHHHQYTNIWDSASIEEQENLKSFWESLDESSKMELVKIDKKSIMEIFKNETKANNQSHHGHGANGTSSASGANSAANANPVTPSCACKYCGRRSTIIEDELENIYDNHFDDIIDFIHEIRDINDLNALPGLLFGGFHMLEEEHKLQKRQQRMKHKRDHPASQNHTENPEVHGEHPHVQPQNFVNSRAPADSINTSVVDNRTPYPVAAGSIGAKQLQHQQQLQQQLQQQQLRQLQQQLQQEQNVHSQPQQSLQMQQQLNENDLPGGNTSDLAKHLEKMSLEDKKGEYTNERKIFQKLLDPKLVEVLDKVDFEKVKSGNYVGSASQANLFQRADCLREIVRDLHKADKTQLEQGLSFLKNISSIFSNSKTPFPADVTSNPRNFSSKFNDQLSNFAEDLLKNDGNSFIEMMESLSESRTAREDLLKDPTKKDAQAWVDEDDNNDSKRPDASTVKQPSQEYEYYEESEEDEEELSEEDEDDADDNGLNEDDDLVQDGHHDDSASDTESEISEEEKMQEIRRLFLIQVIKLFQERLKSAYKEKLSEDRTQKLIEELEAEENAKKERELKKLKQKEKAKEKKRLQQLAKEEEKKKKEEEQRAKEEELKQKQEALKADQRRRKEEAKLKREEEKKKRIEELKRKEEEHKKKVEAQQKKEEEAKKLKEERKKKAEEERKKKEEEKRQKELLKKQKEEERERLKLEAEENERLEKEQQELQELQESQNQLELESAQLPAELAEEINASPDSFSPTKNHLLEQLYQARPSSVSGPTTISPPIQFTPEAVPPVAAVSSVVPSVVPISPALSGAILNGTGSPNSRNAMLYGSSAQAQLPNGLNSSTSNMSPWSSKSRLNSTSGASLQSNLFQPQLSASGFSPFNDFSTPATSAGIGSVNVNAPLASTAVEPLAGANNGGVWNPSTTSSRNNSIWSNTPNLNNASIWGNTLPSLAGGAGAGASTPSAAHTLPNSAPLASDNELIQVAAYNTFQMLQNSNQLEFGAAPLMKLFSGVKLLLGNNALTINQLLSSCDSTSVYHFEFVYDDFGTVTHVKVNFNNGGLAQSLQSQAAPTLLNNTLATSAAGLRSSPPPGLGTKASTGSVPLSQFRFNINDANSPLLSNLGDWSSGNNSTNANGNSSNGGSRGLWN</sequence>
<accession>A3LYI0</accession>
<keyword id="KW-0175">Coiled coil</keyword>
<keyword id="KW-0963">Cytoplasm</keyword>
<keyword id="KW-1185">Reference proteome</keyword>
<keyword id="KW-0346">Stress response</keyword>
<name>NST1_PICST</name>
<protein>
    <recommendedName>
        <fullName>Stress response protein NST1</fullName>
    </recommendedName>
</protein>
<reference key="1">
    <citation type="journal article" date="2007" name="Nat. Biotechnol.">
        <title>Genome sequence of the lignocellulose-bioconverting and xylose-fermenting yeast Pichia stipitis.</title>
        <authorList>
            <person name="Jeffries T.W."/>
            <person name="Grigoriev I.V."/>
            <person name="Grimwood J."/>
            <person name="Laplaza J.M."/>
            <person name="Aerts A."/>
            <person name="Salamov A."/>
            <person name="Schmutz J."/>
            <person name="Lindquist E."/>
            <person name="Dehal P."/>
            <person name="Shapiro H."/>
            <person name="Jin Y.-S."/>
            <person name="Passoth V."/>
            <person name="Richardson P.M."/>
        </authorList>
    </citation>
    <scope>NUCLEOTIDE SEQUENCE [LARGE SCALE GENOMIC DNA]</scope>
    <source>
        <strain>ATCC 58785 / CBS 6054 / NBRC 10063 / NRRL Y-11545</strain>
    </source>
</reference>
<proteinExistence type="inferred from homology"/>